<protein>
    <recommendedName>
        <fullName evidence="1">Holliday junction branch migration complex subunit RuvA</fullName>
    </recommendedName>
</protein>
<proteinExistence type="inferred from homology"/>
<dbReference type="EMBL" id="AE014075">
    <property type="protein sequence ID" value="AAN80732.1"/>
    <property type="molecule type" value="Genomic_DNA"/>
</dbReference>
<dbReference type="RefSeq" id="WP_000580323.1">
    <property type="nucleotide sequence ID" value="NZ_CP051263.1"/>
</dbReference>
<dbReference type="SMR" id="P0A810"/>
<dbReference type="STRING" id="199310.c2275"/>
<dbReference type="GeneID" id="75057740"/>
<dbReference type="KEGG" id="ecc:c2275"/>
<dbReference type="eggNOG" id="COG0632">
    <property type="taxonomic scope" value="Bacteria"/>
</dbReference>
<dbReference type="HOGENOM" id="CLU_087936_0_0_6"/>
<dbReference type="BioCyc" id="ECOL199310:C2275-MONOMER"/>
<dbReference type="Proteomes" id="UP000001410">
    <property type="component" value="Chromosome"/>
</dbReference>
<dbReference type="GO" id="GO:0005737">
    <property type="term" value="C:cytoplasm"/>
    <property type="evidence" value="ECO:0007669"/>
    <property type="project" value="UniProtKB-SubCell"/>
</dbReference>
<dbReference type="GO" id="GO:0009379">
    <property type="term" value="C:Holliday junction helicase complex"/>
    <property type="evidence" value="ECO:0007669"/>
    <property type="project" value="InterPro"/>
</dbReference>
<dbReference type="GO" id="GO:0048476">
    <property type="term" value="C:Holliday junction resolvase complex"/>
    <property type="evidence" value="ECO:0007669"/>
    <property type="project" value="UniProtKB-UniRule"/>
</dbReference>
<dbReference type="GO" id="GO:0005524">
    <property type="term" value="F:ATP binding"/>
    <property type="evidence" value="ECO:0007669"/>
    <property type="project" value="InterPro"/>
</dbReference>
<dbReference type="GO" id="GO:0000400">
    <property type="term" value="F:four-way junction DNA binding"/>
    <property type="evidence" value="ECO:0007669"/>
    <property type="project" value="UniProtKB-UniRule"/>
</dbReference>
<dbReference type="GO" id="GO:0009378">
    <property type="term" value="F:four-way junction helicase activity"/>
    <property type="evidence" value="ECO:0007669"/>
    <property type="project" value="InterPro"/>
</dbReference>
<dbReference type="GO" id="GO:0006310">
    <property type="term" value="P:DNA recombination"/>
    <property type="evidence" value="ECO:0007669"/>
    <property type="project" value="UniProtKB-UniRule"/>
</dbReference>
<dbReference type="GO" id="GO:0006281">
    <property type="term" value="P:DNA repair"/>
    <property type="evidence" value="ECO:0007669"/>
    <property type="project" value="UniProtKB-UniRule"/>
</dbReference>
<dbReference type="GO" id="GO:0009432">
    <property type="term" value="P:SOS response"/>
    <property type="evidence" value="ECO:0007669"/>
    <property type="project" value="UniProtKB-UniRule"/>
</dbReference>
<dbReference type="CDD" id="cd14332">
    <property type="entry name" value="UBA_RuvA_C"/>
    <property type="match status" value="1"/>
</dbReference>
<dbReference type="FunFam" id="1.10.150.20:FF:000012">
    <property type="entry name" value="Holliday junction ATP-dependent DNA helicase RuvA"/>
    <property type="match status" value="1"/>
</dbReference>
<dbReference type="FunFam" id="1.10.8.10:FF:000008">
    <property type="entry name" value="Holliday junction ATP-dependent DNA helicase RuvA"/>
    <property type="match status" value="1"/>
</dbReference>
<dbReference type="FunFam" id="2.40.50.140:FF:000083">
    <property type="entry name" value="Holliday junction ATP-dependent DNA helicase RuvA"/>
    <property type="match status" value="1"/>
</dbReference>
<dbReference type="Gene3D" id="1.10.150.20">
    <property type="entry name" value="5' to 3' exonuclease, C-terminal subdomain"/>
    <property type="match status" value="1"/>
</dbReference>
<dbReference type="Gene3D" id="1.10.8.10">
    <property type="entry name" value="DNA helicase RuvA subunit, C-terminal domain"/>
    <property type="match status" value="1"/>
</dbReference>
<dbReference type="Gene3D" id="2.40.50.140">
    <property type="entry name" value="Nucleic acid-binding proteins"/>
    <property type="match status" value="1"/>
</dbReference>
<dbReference type="HAMAP" id="MF_00031">
    <property type="entry name" value="DNA_HJ_migration_RuvA"/>
    <property type="match status" value="1"/>
</dbReference>
<dbReference type="InterPro" id="IPR013849">
    <property type="entry name" value="DNA_helicase_Holl-junc_RuvA_I"/>
</dbReference>
<dbReference type="InterPro" id="IPR003583">
    <property type="entry name" value="Hlx-hairpin-Hlx_DNA-bd_motif"/>
</dbReference>
<dbReference type="InterPro" id="IPR012340">
    <property type="entry name" value="NA-bd_OB-fold"/>
</dbReference>
<dbReference type="InterPro" id="IPR000085">
    <property type="entry name" value="RuvA"/>
</dbReference>
<dbReference type="InterPro" id="IPR010994">
    <property type="entry name" value="RuvA_2-like"/>
</dbReference>
<dbReference type="InterPro" id="IPR011114">
    <property type="entry name" value="RuvA_C"/>
</dbReference>
<dbReference type="InterPro" id="IPR036267">
    <property type="entry name" value="RuvA_C_sf"/>
</dbReference>
<dbReference type="NCBIfam" id="TIGR00084">
    <property type="entry name" value="ruvA"/>
    <property type="match status" value="1"/>
</dbReference>
<dbReference type="Pfam" id="PF14520">
    <property type="entry name" value="HHH_5"/>
    <property type="match status" value="1"/>
</dbReference>
<dbReference type="Pfam" id="PF07499">
    <property type="entry name" value="RuvA_C"/>
    <property type="match status" value="1"/>
</dbReference>
<dbReference type="Pfam" id="PF01330">
    <property type="entry name" value="RuvA_N"/>
    <property type="match status" value="1"/>
</dbReference>
<dbReference type="SMART" id="SM00278">
    <property type="entry name" value="HhH1"/>
    <property type="match status" value="2"/>
</dbReference>
<dbReference type="SUPFAM" id="SSF46929">
    <property type="entry name" value="DNA helicase RuvA subunit, C-terminal domain"/>
    <property type="match status" value="1"/>
</dbReference>
<dbReference type="SUPFAM" id="SSF50249">
    <property type="entry name" value="Nucleic acid-binding proteins"/>
    <property type="match status" value="1"/>
</dbReference>
<dbReference type="SUPFAM" id="SSF47781">
    <property type="entry name" value="RuvA domain 2-like"/>
    <property type="match status" value="1"/>
</dbReference>
<gene>
    <name evidence="1" type="primary">ruvA</name>
    <name type="ordered locus">c2275</name>
</gene>
<evidence type="ECO:0000255" key="1">
    <source>
        <dbReference type="HAMAP-Rule" id="MF_00031"/>
    </source>
</evidence>
<feature type="chain" id="PRO_0000094631" description="Holliday junction branch migration complex subunit RuvA">
    <location>
        <begin position="1"/>
        <end position="203"/>
    </location>
</feature>
<feature type="region of interest" description="Domain I" evidence="1">
    <location>
        <begin position="1"/>
        <end position="64"/>
    </location>
</feature>
<feature type="region of interest" description="Domain II" evidence="1">
    <location>
        <begin position="65"/>
        <end position="142"/>
    </location>
</feature>
<feature type="region of interest" description="Flexible linker" evidence="1">
    <location>
        <begin position="143"/>
        <end position="154"/>
    </location>
</feature>
<feature type="region of interest" description="Domain III" evidence="1">
    <location>
        <begin position="155"/>
        <end position="203"/>
    </location>
</feature>
<keyword id="KW-0963">Cytoplasm</keyword>
<keyword id="KW-0227">DNA damage</keyword>
<keyword id="KW-0233">DNA recombination</keyword>
<keyword id="KW-0234">DNA repair</keyword>
<keyword id="KW-0238">DNA-binding</keyword>
<keyword id="KW-1185">Reference proteome</keyword>
<keyword id="KW-0742">SOS response</keyword>
<name>RUVA_ECOL6</name>
<reference key="1">
    <citation type="journal article" date="2002" name="Proc. Natl. Acad. Sci. U.S.A.">
        <title>Extensive mosaic structure revealed by the complete genome sequence of uropathogenic Escherichia coli.</title>
        <authorList>
            <person name="Welch R.A."/>
            <person name="Burland V."/>
            <person name="Plunkett G. III"/>
            <person name="Redford P."/>
            <person name="Roesch P."/>
            <person name="Rasko D."/>
            <person name="Buckles E.L."/>
            <person name="Liou S.-R."/>
            <person name="Boutin A."/>
            <person name="Hackett J."/>
            <person name="Stroud D."/>
            <person name="Mayhew G.F."/>
            <person name="Rose D.J."/>
            <person name="Zhou S."/>
            <person name="Schwartz D.C."/>
            <person name="Perna N.T."/>
            <person name="Mobley H.L.T."/>
            <person name="Donnenberg M.S."/>
            <person name="Blattner F.R."/>
        </authorList>
    </citation>
    <scope>NUCLEOTIDE SEQUENCE [LARGE SCALE GENOMIC DNA]</scope>
    <source>
        <strain>CFT073 / ATCC 700928 / UPEC</strain>
    </source>
</reference>
<accession>P0A810</accession>
<accession>P08576</accession>
<comment type="function">
    <text evidence="1">The RuvA-RuvB-RuvC complex processes Holliday junction (HJ) DNA during genetic recombination and DNA repair, while the RuvA-RuvB complex plays an important role in the rescue of blocked DNA replication forks via replication fork reversal (RFR). RuvA specifically binds to HJ cruciform DNA, conferring on it an open structure. The RuvB hexamer acts as an ATP-dependent pump, pulling dsDNA into and through the RuvAB complex. HJ branch migration allows RuvC to scan DNA until it finds its consensus sequence, where it cleaves and resolves the cruciform DNA.</text>
</comment>
<comment type="subunit">
    <text evidence="1">Homotetramer. Forms an RuvA(8)-RuvB(12)-Holliday junction (HJ) complex. HJ DNA is sandwiched between 2 RuvA tetramers; dsDNA enters through RuvA and exits via RuvB. An RuvB hexamer assembles on each DNA strand where it exits the tetramer. Each RuvB hexamer is contacted by two RuvA subunits (via domain III) on 2 adjacent RuvB subunits; this complex drives branch migration. In the full resolvosome a probable DNA-RuvA(4)-RuvB(12)-RuvC(2) complex forms which resolves the HJ.</text>
</comment>
<comment type="subcellular location">
    <subcellularLocation>
        <location evidence="1">Cytoplasm</location>
    </subcellularLocation>
</comment>
<comment type="domain">
    <text evidence="1">Has three domains with a flexible linker between the domains II and III and assumes an 'L' shape. Domain III is highly mobile and contacts RuvB.</text>
</comment>
<comment type="similarity">
    <text evidence="1">Belongs to the RuvA family.</text>
</comment>
<sequence length="203" mass="22086">MIGRLRGIIIEKQPPLVLIEVGGVGYEVHMPMTCFYELPEAGQEAIVFTHFVVREDAQLLYGFNNKQERTLFKELIKTNGVGPKLALAILSGMSAQQFVNAVEREEVGALVKLPGIGKKTAERLIVEMKDRFKGLHGDLFTPAADLVLTSPASPATDDAEQEAVAALVALGYKPQEASRMVSKIARPDASSETLIREALRAAL</sequence>
<organism>
    <name type="scientific">Escherichia coli O6:H1 (strain CFT073 / ATCC 700928 / UPEC)</name>
    <dbReference type="NCBI Taxonomy" id="199310"/>
    <lineage>
        <taxon>Bacteria</taxon>
        <taxon>Pseudomonadati</taxon>
        <taxon>Pseudomonadota</taxon>
        <taxon>Gammaproteobacteria</taxon>
        <taxon>Enterobacterales</taxon>
        <taxon>Enterobacteriaceae</taxon>
        <taxon>Escherichia</taxon>
    </lineage>
</organism>